<accession>Q9FMR0</accession>
<accession>Q96507</accession>
<comment type="function">
    <text>Removal of H(2)O(2), oxidation of toxic reductants, biosynthesis and degradation of lignin, suberization, auxin catabolism, response to environmental stresses such as wounding, pathogen attack and oxidative stress. These functions might be dependent on each isozyme/isoform in each plant tissue.</text>
</comment>
<comment type="catalytic activity">
    <reaction>
        <text>2 a phenolic donor + H2O2 = 2 a phenolic radical donor + 2 H2O</text>
        <dbReference type="Rhea" id="RHEA:56136"/>
        <dbReference type="ChEBI" id="CHEBI:15377"/>
        <dbReference type="ChEBI" id="CHEBI:16240"/>
        <dbReference type="ChEBI" id="CHEBI:139520"/>
        <dbReference type="ChEBI" id="CHEBI:139521"/>
        <dbReference type="EC" id="1.11.1.7"/>
    </reaction>
</comment>
<comment type="cofactor">
    <cofactor evidence="2">
        <name>heme b</name>
        <dbReference type="ChEBI" id="CHEBI:60344"/>
    </cofactor>
    <text evidence="2">Binds 1 heme b (iron(II)-protoporphyrin IX) group per subunit.</text>
</comment>
<comment type="cofactor">
    <cofactor evidence="2">
        <name>Ca(2+)</name>
        <dbReference type="ChEBI" id="CHEBI:29108"/>
    </cofactor>
    <text evidence="2">Binds 2 calcium ions per subunit.</text>
</comment>
<comment type="subcellular location">
    <subcellularLocation>
        <location evidence="2">Secreted</location>
    </subcellularLocation>
</comment>
<comment type="tissue specificity">
    <text>Expressed in roots, slightly in leaves.</text>
</comment>
<comment type="miscellaneous">
    <text>There are 73 peroxidase genes in A.thaliana.</text>
</comment>
<comment type="similarity">
    <text evidence="2">Belongs to the peroxidase family. Classical plant (class III) peroxidase subfamily.</text>
</comment>
<dbReference type="EC" id="1.11.1.7"/>
<dbReference type="EMBL" id="X98803">
    <property type="protein sequence ID" value="CAA67335.1"/>
    <property type="molecule type" value="mRNA"/>
</dbReference>
<dbReference type="EMBL" id="AB007651">
    <property type="protein sequence ID" value="BAB08340.1"/>
    <property type="molecule type" value="Genomic_DNA"/>
</dbReference>
<dbReference type="EMBL" id="CP002688">
    <property type="protein sequence ID" value="AED93023.1"/>
    <property type="molecule type" value="Genomic_DNA"/>
</dbReference>
<dbReference type="RefSeq" id="NP_197633.1">
    <property type="nucleotide sequence ID" value="NM_122146.4"/>
</dbReference>
<dbReference type="SMR" id="Q9FMR0"/>
<dbReference type="BioGRID" id="17577">
    <property type="interactions" value="2"/>
</dbReference>
<dbReference type="FunCoup" id="Q9FMR0">
    <property type="interactions" value="129"/>
</dbReference>
<dbReference type="STRING" id="3702.Q9FMR0"/>
<dbReference type="PeroxiBase" id="226">
    <property type="entry name" value="AtPrx60"/>
</dbReference>
<dbReference type="GlyCosmos" id="Q9FMR0">
    <property type="glycosylation" value="1 site, No reported glycans"/>
</dbReference>
<dbReference type="GlyGen" id="Q9FMR0">
    <property type="glycosylation" value="1 site"/>
</dbReference>
<dbReference type="PaxDb" id="3702-AT5G22410.1"/>
<dbReference type="ProteomicsDB" id="234826"/>
<dbReference type="EnsemblPlants" id="AT5G22410.1">
    <property type="protein sequence ID" value="AT5G22410.1"/>
    <property type="gene ID" value="AT5G22410"/>
</dbReference>
<dbReference type="GeneID" id="832302"/>
<dbReference type="Gramene" id="AT5G22410.1">
    <property type="protein sequence ID" value="AT5G22410.1"/>
    <property type="gene ID" value="AT5G22410"/>
</dbReference>
<dbReference type="KEGG" id="ath:AT5G22410"/>
<dbReference type="Araport" id="AT5G22410"/>
<dbReference type="TAIR" id="AT5G22410">
    <property type="gene designation" value="RHS18"/>
</dbReference>
<dbReference type="eggNOG" id="ENOG502QPI1">
    <property type="taxonomic scope" value="Eukaryota"/>
</dbReference>
<dbReference type="HOGENOM" id="CLU_010543_0_3_1"/>
<dbReference type="InParanoid" id="Q9FMR0"/>
<dbReference type="OMA" id="AMIRLYF"/>
<dbReference type="PhylomeDB" id="Q9FMR0"/>
<dbReference type="BioCyc" id="ARA:AT5G22410-MONOMER"/>
<dbReference type="PRO" id="PR:Q9FMR0"/>
<dbReference type="Proteomes" id="UP000006548">
    <property type="component" value="Chromosome 5"/>
</dbReference>
<dbReference type="ExpressionAtlas" id="Q9FMR0">
    <property type="expression patterns" value="baseline and differential"/>
</dbReference>
<dbReference type="GO" id="GO:0005576">
    <property type="term" value="C:extracellular region"/>
    <property type="evidence" value="ECO:0007669"/>
    <property type="project" value="UniProtKB-SubCell"/>
</dbReference>
<dbReference type="GO" id="GO:0020037">
    <property type="term" value="F:heme binding"/>
    <property type="evidence" value="ECO:0007669"/>
    <property type="project" value="InterPro"/>
</dbReference>
<dbReference type="GO" id="GO:0140825">
    <property type="term" value="F:lactoperoxidase activity"/>
    <property type="evidence" value="ECO:0007669"/>
    <property type="project" value="UniProtKB-EC"/>
</dbReference>
<dbReference type="GO" id="GO:0046872">
    <property type="term" value="F:metal ion binding"/>
    <property type="evidence" value="ECO:0007669"/>
    <property type="project" value="UniProtKB-KW"/>
</dbReference>
<dbReference type="GO" id="GO:0042744">
    <property type="term" value="P:hydrogen peroxide catabolic process"/>
    <property type="evidence" value="ECO:0007669"/>
    <property type="project" value="UniProtKB-KW"/>
</dbReference>
<dbReference type="GO" id="GO:0006979">
    <property type="term" value="P:response to oxidative stress"/>
    <property type="evidence" value="ECO:0007669"/>
    <property type="project" value="InterPro"/>
</dbReference>
<dbReference type="CDD" id="cd00693">
    <property type="entry name" value="secretory_peroxidase"/>
    <property type="match status" value="1"/>
</dbReference>
<dbReference type="FunFam" id="1.10.420.10:FF:000007">
    <property type="entry name" value="Peroxidase"/>
    <property type="match status" value="1"/>
</dbReference>
<dbReference type="FunFam" id="1.10.520.10:FF:000009">
    <property type="entry name" value="Peroxidase"/>
    <property type="match status" value="1"/>
</dbReference>
<dbReference type="Gene3D" id="1.10.520.10">
    <property type="match status" value="1"/>
</dbReference>
<dbReference type="Gene3D" id="1.10.420.10">
    <property type="entry name" value="Peroxidase, domain 2"/>
    <property type="match status" value="1"/>
</dbReference>
<dbReference type="InterPro" id="IPR002016">
    <property type="entry name" value="Haem_peroxidase"/>
</dbReference>
<dbReference type="InterPro" id="IPR010255">
    <property type="entry name" value="Haem_peroxidase_sf"/>
</dbReference>
<dbReference type="InterPro" id="IPR000823">
    <property type="entry name" value="Peroxidase_pln"/>
</dbReference>
<dbReference type="InterPro" id="IPR019794">
    <property type="entry name" value="Peroxidases_AS"/>
</dbReference>
<dbReference type="InterPro" id="IPR019793">
    <property type="entry name" value="Peroxidases_heam-ligand_BS"/>
</dbReference>
<dbReference type="InterPro" id="IPR033905">
    <property type="entry name" value="Secretory_peroxidase"/>
</dbReference>
<dbReference type="PANTHER" id="PTHR31517">
    <property type="match status" value="1"/>
</dbReference>
<dbReference type="PANTHER" id="PTHR31517:SF59">
    <property type="entry name" value="PEROXIDASE"/>
    <property type="match status" value="1"/>
</dbReference>
<dbReference type="Pfam" id="PF00141">
    <property type="entry name" value="peroxidase"/>
    <property type="match status" value="1"/>
</dbReference>
<dbReference type="PRINTS" id="PR00458">
    <property type="entry name" value="PEROXIDASE"/>
</dbReference>
<dbReference type="PRINTS" id="PR00461">
    <property type="entry name" value="PLPEROXIDASE"/>
</dbReference>
<dbReference type="SUPFAM" id="SSF48113">
    <property type="entry name" value="Heme-dependent peroxidases"/>
    <property type="match status" value="1"/>
</dbReference>
<dbReference type="PROSITE" id="PS00435">
    <property type="entry name" value="PEROXIDASE_1"/>
    <property type="match status" value="1"/>
</dbReference>
<dbReference type="PROSITE" id="PS00436">
    <property type="entry name" value="PEROXIDASE_2"/>
    <property type="match status" value="1"/>
</dbReference>
<dbReference type="PROSITE" id="PS50873">
    <property type="entry name" value="PEROXIDASE_4"/>
    <property type="match status" value="1"/>
</dbReference>
<name>PER60_ARATH</name>
<evidence type="ECO:0000255" key="1"/>
<evidence type="ECO:0000255" key="2">
    <source>
        <dbReference type="PROSITE-ProRule" id="PRU00297"/>
    </source>
</evidence>
<evidence type="ECO:0000255" key="3">
    <source>
        <dbReference type="PROSITE-ProRule" id="PRU10012"/>
    </source>
</evidence>
<evidence type="ECO:0000305" key="4"/>
<sequence length="331" mass="36016">MAVKISTIEVLILSLALLSFGHGCYGQLRLGFYSQNCQNVENIVSKVVGEAFIKDSSIAPAMIRLYFHDCFSNGCDASLLLDGSNSEKKASPNLSVRGYEVIDDIKSAVEKECDRVVSCADIIALATRDLVTLASGGKTRYEIPTGRLDGKISSALLVDLPSPKMTVAETAAKFDQRKLSLNDMVLLLGGHTIGVTHCSFIMDRLYNFQNTQKPDPSMDPKLVEELSAKCPKSSSTDGIISLDQNATSSNTMDVSFYKEIKVSRGVLHIDQKLAIDDLTSKMVTDIANGNDFLVRFGQAMVNLGSVRVISKPKDGEIRRSCRSTCNNPLCV</sequence>
<protein>
    <recommendedName>
        <fullName>Peroxidase 60</fullName>
        <shortName>Atperox P60</shortName>
        <ecNumber>1.11.1.7</ecNumber>
    </recommendedName>
    <alternativeName>
        <fullName>ATP14a</fullName>
    </alternativeName>
</protein>
<gene>
    <name type="primary">PER60</name>
    <name type="synonym">P60</name>
    <name type="ordered locus">At5g22410</name>
    <name type="ORF">MWD9.21</name>
</gene>
<proteinExistence type="evidence at protein level"/>
<feature type="signal peptide" evidence="1">
    <location>
        <begin position="1"/>
        <end position="26"/>
    </location>
</feature>
<feature type="chain" id="PRO_0000023725" description="Peroxidase 60">
    <location>
        <begin position="27"/>
        <end position="331"/>
    </location>
</feature>
<feature type="active site" description="Proton acceptor" evidence="2 3">
    <location>
        <position position="68"/>
    </location>
</feature>
<feature type="binding site" evidence="2">
    <location>
        <position position="69"/>
    </location>
    <ligand>
        <name>Ca(2+)</name>
        <dbReference type="ChEBI" id="CHEBI:29108"/>
        <label>1</label>
    </ligand>
</feature>
<feature type="binding site" evidence="2">
    <location>
        <position position="74"/>
    </location>
    <ligand>
        <name>Ca(2+)</name>
        <dbReference type="ChEBI" id="CHEBI:29108"/>
        <label>1</label>
    </ligand>
</feature>
<feature type="binding site" evidence="2">
    <location>
        <position position="76"/>
    </location>
    <ligand>
        <name>Ca(2+)</name>
        <dbReference type="ChEBI" id="CHEBI:29108"/>
        <label>1</label>
    </ligand>
</feature>
<feature type="binding site" evidence="2">
    <location>
        <position position="78"/>
    </location>
    <ligand>
        <name>Ca(2+)</name>
        <dbReference type="ChEBI" id="CHEBI:29108"/>
        <label>1</label>
    </ligand>
</feature>
<feature type="binding site" evidence="2">
    <location>
        <position position="161"/>
    </location>
    <ligand>
        <name>substrate</name>
    </ligand>
</feature>
<feature type="binding site" description="axial binding residue" evidence="2">
    <location>
        <position position="191"/>
    </location>
    <ligand>
        <name>heme b</name>
        <dbReference type="ChEBI" id="CHEBI:60344"/>
    </ligand>
    <ligandPart>
        <name>Fe</name>
        <dbReference type="ChEBI" id="CHEBI:18248"/>
    </ligandPart>
</feature>
<feature type="binding site" evidence="2">
    <location>
        <position position="192"/>
    </location>
    <ligand>
        <name>Ca(2+)</name>
        <dbReference type="ChEBI" id="CHEBI:29108"/>
        <label>2</label>
    </ligand>
</feature>
<feature type="binding site" evidence="2">
    <location>
        <position position="248"/>
    </location>
    <ligand>
        <name>Ca(2+)</name>
        <dbReference type="ChEBI" id="CHEBI:29108"/>
        <label>2</label>
    </ligand>
</feature>
<feature type="binding site" evidence="2">
    <location>
        <position position="253"/>
    </location>
    <ligand>
        <name>Ca(2+)</name>
        <dbReference type="ChEBI" id="CHEBI:29108"/>
        <label>2</label>
    </ligand>
</feature>
<feature type="site" description="Transition state stabilizer" evidence="2">
    <location>
        <position position="64"/>
    </location>
</feature>
<feature type="glycosylation site" description="N-linked (GlcNAc...) asparagine" evidence="1">
    <location>
        <position position="245"/>
    </location>
</feature>
<feature type="disulfide bond" evidence="2">
    <location>
        <begin position="37"/>
        <end position="113"/>
    </location>
</feature>
<feature type="disulfide bond" evidence="2">
    <location>
        <begin position="70"/>
        <end position="75"/>
    </location>
</feature>
<feature type="disulfide bond" evidence="2">
    <location>
        <begin position="119"/>
        <end position="321"/>
    </location>
</feature>
<feature type="disulfide bond" evidence="2">
    <location>
        <begin position="198"/>
        <end position="230"/>
    </location>
</feature>
<feature type="sequence conflict" description="In Ref. 1; CAA67335." evidence="4" ref="1">
    <original>N</original>
    <variation>T</variation>
    <location>
        <position position="182"/>
    </location>
</feature>
<feature type="sequence conflict" description="In Ref. 1; CAA67335." evidence="4" ref="1">
    <original>A</original>
    <variation>G</variation>
    <location>
        <position position="228"/>
    </location>
</feature>
<feature type="sequence conflict" description="In Ref. 1; CAA67335." evidence="4" ref="1">
    <original>S</original>
    <variation>G</variation>
    <location>
        <position position="233"/>
    </location>
</feature>
<feature type="sequence conflict" description="In Ref. 1; CAA67335." evidence="4" ref="1">
    <original>S</original>
    <variation>N</variation>
    <location>
        <position position="241"/>
    </location>
</feature>
<feature type="sequence conflict" description="In Ref. 1; CAA67335." evidence="4" ref="1">
    <original>I</original>
    <variation>N</variation>
    <location>
        <position position="275"/>
    </location>
</feature>
<feature type="sequence conflict" description="In Ref. 1; CAA67335." evidence="4" ref="1">
    <original>S</original>
    <variation>R</variation>
    <location>
        <position position="280"/>
    </location>
</feature>
<organism>
    <name type="scientific">Arabidopsis thaliana</name>
    <name type="common">Mouse-ear cress</name>
    <dbReference type="NCBI Taxonomy" id="3702"/>
    <lineage>
        <taxon>Eukaryota</taxon>
        <taxon>Viridiplantae</taxon>
        <taxon>Streptophyta</taxon>
        <taxon>Embryophyta</taxon>
        <taxon>Tracheophyta</taxon>
        <taxon>Spermatophyta</taxon>
        <taxon>Magnoliopsida</taxon>
        <taxon>eudicotyledons</taxon>
        <taxon>Gunneridae</taxon>
        <taxon>Pentapetalae</taxon>
        <taxon>rosids</taxon>
        <taxon>malvids</taxon>
        <taxon>Brassicales</taxon>
        <taxon>Brassicaceae</taxon>
        <taxon>Camelineae</taxon>
        <taxon>Arabidopsis</taxon>
    </lineage>
</organism>
<keyword id="KW-0106">Calcium</keyword>
<keyword id="KW-1015">Disulfide bond</keyword>
<keyword id="KW-0325">Glycoprotein</keyword>
<keyword id="KW-0349">Heme</keyword>
<keyword id="KW-0376">Hydrogen peroxide</keyword>
<keyword id="KW-0408">Iron</keyword>
<keyword id="KW-0479">Metal-binding</keyword>
<keyword id="KW-0560">Oxidoreductase</keyword>
<keyword id="KW-0575">Peroxidase</keyword>
<keyword id="KW-1185">Reference proteome</keyword>
<keyword id="KW-0964">Secreted</keyword>
<keyword id="KW-0732">Signal</keyword>
<reference key="1">
    <citation type="submission" date="1996-06" db="EMBL/GenBank/DDBJ databases">
        <title>From expressed sequence tags to structure, function, evolution and expression of 28 ER-targeted Arabidopsis peroxidases.</title>
        <authorList>
            <person name="Welinder K.G."/>
            <person name="Jespersen H.M."/>
            <person name="Kjaersgaard I.V.H."/>
            <person name="Justesen A.F."/>
            <person name="Oestergaard L."/>
            <person name="Abelskov A.K."/>
            <person name="Hansen L.N."/>
            <person name="Rasmussen S.K."/>
        </authorList>
    </citation>
    <scope>NUCLEOTIDE SEQUENCE [MRNA]</scope>
    <source>
        <strain>cv. Columbia</strain>
    </source>
</reference>
<reference key="2">
    <citation type="journal article" date="1997" name="DNA Res.">
        <title>Structural analysis of Arabidopsis thaliana chromosome 5. III. Sequence features of the regions of 1,191,918 bp covered by seventeen physically assigned P1 clones.</title>
        <authorList>
            <person name="Nakamura Y."/>
            <person name="Sato S."/>
            <person name="Kaneko T."/>
            <person name="Kotani H."/>
            <person name="Asamizu E."/>
            <person name="Miyajima N."/>
            <person name="Tabata S."/>
        </authorList>
    </citation>
    <scope>NUCLEOTIDE SEQUENCE [LARGE SCALE GENOMIC DNA]</scope>
    <source>
        <strain>cv. Columbia</strain>
    </source>
</reference>
<reference key="3">
    <citation type="journal article" date="2017" name="Plant J.">
        <title>Araport11: a complete reannotation of the Arabidopsis thaliana reference genome.</title>
        <authorList>
            <person name="Cheng C.Y."/>
            <person name="Krishnakumar V."/>
            <person name="Chan A.P."/>
            <person name="Thibaud-Nissen F."/>
            <person name="Schobel S."/>
            <person name="Town C.D."/>
        </authorList>
    </citation>
    <scope>GENOME REANNOTATION</scope>
    <source>
        <strain>cv. Columbia</strain>
    </source>
</reference>
<reference key="4">
    <citation type="journal article" date="1998" name="FEBS Lett.">
        <title>Computational analyses and annotations of the Arabidopsis peroxidase gene family.</title>
        <authorList>
            <person name="Oestergaard L."/>
            <person name="Pedersen A.G."/>
            <person name="Jespersen H.M."/>
            <person name="Brunak S."/>
            <person name="Welinder K.G."/>
        </authorList>
    </citation>
    <scope>CHARACTERIZATION</scope>
    <source>
        <strain>cv. Columbia</strain>
    </source>
</reference>
<reference key="5">
    <citation type="journal article" date="2002" name="Gene">
        <title>Analysis and expression of the class III peroxidase large gene family in Arabidopsis thaliana.</title>
        <authorList>
            <person name="Tognolli M."/>
            <person name="Penel C."/>
            <person name="Greppin H."/>
            <person name="Simon P."/>
        </authorList>
    </citation>
    <scope>GENE FAMILY ORGANIZATION</scope>
    <scope>NOMENCLATURE</scope>
    <source>
        <strain>cv. Columbia</strain>
    </source>
</reference>